<accession>A3NAE5</accession>
<evidence type="ECO:0000255" key="1">
    <source>
        <dbReference type="HAMAP-Rule" id="MF_00165"/>
    </source>
</evidence>
<proteinExistence type="inferred from homology"/>
<comment type="function">
    <text evidence="1">Phosphorylation of dTMP to form dTDP in both de novo and salvage pathways of dTTP synthesis.</text>
</comment>
<comment type="catalytic activity">
    <reaction evidence="1">
        <text>dTMP + ATP = dTDP + ADP</text>
        <dbReference type="Rhea" id="RHEA:13517"/>
        <dbReference type="ChEBI" id="CHEBI:30616"/>
        <dbReference type="ChEBI" id="CHEBI:58369"/>
        <dbReference type="ChEBI" id="CHEBI:63528"/>
        <dbReference type="ChEBI" id="CHEBI:456216"/>
        <dbReference type="EC" id="2.7.4.9"/>
    </reaction>
</comment>
<comment type="similarity">
    <text evidence="1">Belongs to the thymidylate kinase family.</text>
</comment>
<gene>
    <name evidence="1" type="primary">tmk</name>
    <name type="ordered locus">BURPS668_2281</name>
</gene>
<feature type="chain" id="PRO_1000023163" description="Thymidylate kinase">
    <location>
        <begin position="1"/>
        <end position="206"/>
    </location>
</feature>
<feature type="binding site" evidence="1">
    <location>
        <begin position="11"/>
        <end position="18"/>
    </location>
    <ligand>
        <name>ATP</name>
        <dbReference type="ChEBI" id="CHEBI:30616"/>
    </ligand>
</feature>
<protein>
    <recommendedName>
        <fullName evidence="1">Thymidylate kinase</fullName>
        <ecNumber evidence="1">2.7.4.9</ecNumber>
    </recommendedName>
    <alternativeName>
        <fullName evidence="1">dTMP kinase</fullName>
    </alternativeName>
</protein>
<sequence length="206" mass="23100">MARGKFITFEGIDGAGKTTHLQWFCDRLQERLGPTGRHVVVTREPGGTQLGETLREILLNQPMDLETEALLMFAGRREHLALVIEPALARGDWVVSDRFTDATFAYQGGGRGLPRDKLEALERWVQGGFQPDLTVLFDVQPQVASARRGAVRMPDKFESESDAFFARTRAEYLRRAHEAPHRFAIVDSSESIPQIRKQLEGVLAAL</sequence>
<organism>
    <name type="scientific">Burkholderia pseudomallei (strain 668)</name>
    <dbReference type="NCBI Taxonomy" id="320373"/>
    <lineage>
        <taxon>Bacteria</taxon>
        <taxon>Pseudomonadati</taxon>
        <taxon>Pseudomonadota</taxon>
        <taxon>Betaproteobacteria</taxon>
        <taxon>Burkholderiales</taxon>
        <taxon>Burkholderiaceae</taxon>
        <taxon>Burkholderia</taxon>
        <taxon>pseudomallei group</taxon>
    </lineage>
</organism>
<dbReference type="EC" id="2.7.4.9" evidence="1"/>
<dbReference type="EMBL" id="CP000570">
    <property type="protein sequence ID" value="ABN83271.1"/>
    <property type="molecule type" value="Genomic_DNA"/>
</dbReference>
<dbReference type="RefSeq" id="WP_004193022.1">
    <property type="nucleotide sequence ID" value="NC_009074.1"/>
</dbReference>
<dbReference type="SMR" id="A3NAE5"/>
<dbReference type="GeneID" id="92979159"/>
<dbReference type="KEGG" id="bpd:BURPS668_2281"/>
<dbReference type="HOGENOM" id="CLU_049131_0_2_4"/>
<dbReference type="GO" id="GO:0005829">
    <property type="term" value="C:cytosol"/>
    <property type="evidence" value="ECO:0007669"/>
    <property type="project" value="TreeGrafter"/>
</dbReference>
<dbReference type="GO" id="GO:0005524">
    <property type="term" value="F:ATP binding"/>
    <property type="evidence" value="ECO:0007669"/>
    <property type="project" value="UniProtKB-UniRule"/>
</dbReference>
<dbReference type="GO" id="GO:0004798">
    <property type="term" value="F:dTMP kinase activity"/>
    <property type="evidence" value="ECO:0007669"/>
    <property type="project" value="UniProtKB-UniRule"/>
</dbReference>
<dbReference type="GO" id="GO:0006233">
    <property type="term" value="P:dTDP biosynthetic process"/>
    <property type="evidence" value="ECO:0007669"/>
    <property type="project" value="InterPro"/>
</dbReference>
<dbReference type="GO" id="GO:0006235">
    <property type="term" value="P:dTTP biosynthetic process"/>
    <property type="evidence" value="ECO:0007669"/>
    <property type="project" value="UniProtKB-UniRule"/>
</dbReference>
<dbReference type="GO" id="GO:0006227">
    <property type="term" value="P:dUDP biosynthetic process"/>
    <property type="evidence" value="ECO:0007669"/>
    <property type="project" value="TreeGrafter"/>
</dbReference>
<dbReference type="CDD" id="cd01672">
    <property type="entry name" value="TMPK"/>
    <property type="match status" value="1"/>
</dbReference>
<dbReference type="FunFam" id="3.40.50.300:FF:000225">
    <property type="entry name" value="Thymidylate kinase"/>
    <property type="match status" value="1"/>
</dbReference>
<dbReference type="Gene3D" id="3.40.50.300">
    <property type="entry name" value="P-loop containing nucleotide triphosphate hydrolases"/>
    <property type="match status" value="1"/>
</dbReference>
<dbReference type="HAMAP" id="MF_00165">
    <property type="entry name" value="Thymidylate_kinase"/>
    <property type="match status" value="1"/>
</dbReference>
<dbReference type="InterPro" id="IPR027417">
    <property type="entry name" value="P-loop_NTPase"/>
</dbReference>
<dbReference type="InterPro" id="IPR039430">
    <property type="entry name" value="Thymidylate_kin-like_dom"/>
</dbReference>
<dbReference type="InterPro" id="IPR018094">
    <property type="entry name" value="Thymidylate_kinase"/>
</dbReference>
<dbReference type="NCBIfam" id="TIGR00041">
    <property type="entry name" value="DTMP_kinase"/>
    <property type="match status" value="1"/>
</dbReference>
<dbReference type="PANTHER" id="PTHR10344">
    <property type="entry name" value="THYMIDYLATE KINASE"/>
    <property type="match status" value="1"/>
</dbReference>
<dbReference type="PANTHER" id="PTHR10344:SF4">
    <property type="entry name" value="UMP-CMP KINASE 2, MITOCHONDRIAL"/>
    <property type="match status" value="1"/>
</dbReference>
<dbReference type="Pfam" id="PF02223">
    <property type="entry name" value="Thymidylate_kin"/>
    <property type="match status" value="1"/>
</dbReference>
<dbReference type="SUPFAM" id="SSF52540">
    <property type="entry name" value="P-loop containing nucleoside triphosphate hydrolases"/>
    <property type="match status" value="1"/>
</dbReference>
<keyword id="KW-0067">ATP-binding</keyword>
<keyword id="KW-0418">Kinase</keyword>
<keyword id="KW-0545">Nucleotide biosynthesis</keyword>
<keyword id="KW-0547">Nucleotide-binding</keyword>
<keyword id="KW-0808">Transferase</keyword>
<name>KTHY_BURP6</name>
<reference key="1">
    <citation type="journal article" date="2010" name="Genome Biol. Evol.">
        <title>Continuing evolution of Burkholderia mallei through genome reduction and large-scale rearrangements.</title>
        <authorList>
            <person name="Losada L."/>
            <person name="Ronning C.M."/>
            <person name="DeShazer D."/>
            <person name="Woods D."/>
            <person name="Fedorova N."/>
            <person name="Kim H.S."/>
            <person name="Shabalina S.A."/>
            <person name="Pearson T.R."/>
            <person name="Brinkac L."/>
            <person name="Tan P."/>
            <person name="Nandi T."/>
            <person name="Crabtree J."/>
            <person name="Badger J."/>
            <person name="Beckstrom-Sternberg S."/>
            <person name="Saqib M."/>
            <person name="Schutzer S.E."/>
            <person name="Keim P."/>
            <person name="Nierman W.C."/>
        </authorList>
    </citation>
    <scope>NUCLEOTIDE SEQUENCE [LARGE SCALE GENOMIC DNA]</scope>
    <source>
        <strain>668</strain>
    </source>
</reference>